<accession>Q12ZQ0</accession>
<reference key="1">
    <citation type="journal article" date="2009" name="ISME J.">
        <title>The genome sequence of the psychrophilic archaeon, Methanococcoides burtonii: the role of genome evolution in cold adaptation.</title>
        <authorList>
            <person name="Allen M.A."/>
            <person name="Lauro F.M."/>
            <person name="Williams T.J."/>
            <person name="Burg D."/>
            <person name="Siddiqui K.S."/>
            <person name="De Francisci D."/>
            <person name="Chong K.W."/>
            <person name="Pilak O."/>
            <person name="Chew H.H."/>
            <person name="De Maere M.Z."/>
            <person name="Ting L."/>
            <person name="Katrib M."/>
            <person name="Ng C."/>
            <person name="Sowers K.R."/>
            <person name="Galperin M.Y."/>
            <person name="Anderson I.J."/>
            <person name="Ivanova N."/>
            <person name="Dalin E."/>
            <person name="Martinez M."/>
            <person name="Lapidus A."/>
            <person name="Hauser L."/>
            <person name="Land M."/>
            <person name="Thomas T."/>
            <person name="Cavicchioli R."/>
        </authorList>
    </citation>
    <scope>NUCLEOTIDE SEQUENCE [LARGE SCALE GENOMIC DNA]</scope>
    <source>
        <strain>DSM 6242 / NBRC 107633 / OCM 468 / ACE-M</strain>
    </source>
</reference>
<keyword id="KW-0378">Hydrolase</keyword>
<keyword id="KW-0408">Iron</keyword>
<keyword id="KW-0479">Metal-binding</keyword>
<dbReference type="EC" id="3.5.4.39" evidence="1"/>
<dbReference type="EMBL" id="CP000300">
    <property type="protein sequence ID" value="ABE51076.1"/>
    <property type="molecule type" value="Genomic_DNA"/>
</dbReference>
<dbReference type="RefSeq" id="WP_011498240.1">
    <property type="nucleotide sequence ID" value="NC_007955.1"/>
</dbReference>
<dbReference type="SMR" id="Q12ZQ0"/>
<dbReference type="STRING" id="259564.Mbur_0054"/>
<dbReference type="GeneID" id="3996851"/>
<dbReference type="KEGG" id="mbu:Mbur_0054"/>
<dbReference type="HOGENOM" id="CLU_062816_1_0_2"/>
<dbReference type="OrthoDB" id="53087at2157"/>
<dbReference type="UniPathway" id="UPA00065"/>
<dbReference type="Proteomes" id="UP000001979">
    <property type="component" value="Chromosome"/>
</dbReference>
<dbReference type="GO" id="GO:0003934">
    <property type="term" value="F:GTP cyclohydrolase I activity"/>
    <property type="evidence" value="ECO:0007669"/>
    <property type="project" value="InterPro"/>
</dbReference>
<dbReference type="GO" id="GO:0044682">
    <property type="term" value="F:GTP cyclohydrolase IV activity"/>
    <property type="evidence" value="ECO:0007669"/>
    <property type="project" value="UniProtKB-UniRule"/>
</dbReference>
<dbReference type="GO" id="GO:0005506">
    <property type="term" value="F:iron ion binding"/>
    <property type="evidence" value="ECO:0007669"/>
    <property type="project" value="UniProtKB-UniRule"/>
</dbReference>
<dbReference type="GO" id="GO:2001118">
    <property type="term" value="P:tetrahydromethanopterin biosynthetic process"/>
    <property type="evidence" value="ECO:0007669"/>
    <property type="project" value="UniProtKB-UniRule"/>
</dbReference>
<dbReference type="Gene3D" id="3.10.270.10">
    <property type="entry name" value="Urate Oxidase"/>
    <property type="match status" value="1"/>
</dbReference>
<dbReference type="HAMAP" id="MF_01527_A">
    <property type="entry name" value="GTP_cyclohydrol_A"/>
    <property type="match status" value="1"/>
</dbReference>
<dbReference type="InterPro" id="IPR003801">
    <property type="entry name" value="GTP_cyclohydrolase_FolE2/MptA"/>
</dbReference>
<dbReference type="InterPro" id="IPR022840">
    <property type="entry name" value="GTP_cyclohydrolase_MptA"/>
</dbReference>
<dbReference type="NCBIfam" id="TIGR00294">
    <property type="entry name" value="GTP cyclohydrolase MptA"/>
    <property type="match status" value="1"/>
</dbReference>
<dbReference type="PANTHER" id="PTHR36445">
    <property type="entry name" value="GTP CYCLOHYDROLASE MPTA"/>
    <property type="match status" value="1"/>
</dbReference>
<dbReference type="PANTHER" id="PTHR36445:SF1">
    <property type="entry name" value="GTP CYCLOHYDROLASE MPTA"/>
    <property type="match status" value="1"/>
</dbReference>
<dbReference type="Pfam" id="PF02649">
    <property type="entry name" value="GCHY-1"/>
    <property type="match status" value="1"/>
</dbReference>
<gene>
    <name evidence="1" type="primary">mptA</name>
    <name type="ordered locus">Mbur_0054</name>
</gene>
<feature type="chain" id="PRO_0000289535" description="GTP cyclohydrolase MptA">
    <location>
        <begin position="1"/>
        <end position="317"/>
    </location>
</feature>
<feature type="site" description="May be catalytically important" evidence="1">
    <location>
        <position position="165"/>
    </location>
</feature>
<proteinExistence type="inferred from homology"/>
<evidence type="ECO:0000255" key="1">
    <source>
        <dbReference type="HAMAP-Rule" id="MF_01527"/>
    </source>
</evidence>
<organism>
    <name type="scientific">Methanococcoides burtonii (strain DSM 6242 / NBRC 107633 / OCM 468 / ACE-M)</name>
    <dbReference type="NCBI Taxonomy" id="259564"/>
    <lineage>
        <taxon>Archaea</taxon>
        <taxon>Methanobacteriati</taxon>
        <taxon>Methanobacteriota</taxon>
        <taxon>Stenosarchaea group</taxon>
        <taxon>Methanomicrobia</taxon>
        <taxon>Methanosarcinales</taxon>
        <taxon>Methanosarcinaceae</taxon>
        <taxon>Methanococcoides</taxon>
    </lineage>
</organism>
<comment type="function">
    <text evidence="1">Converts GTP to 7,8-dihydro-D-neopterin 2',3'-cyclic phosphate, the first intermediate in the biosynthesis of coenzyme methanopterin.</text>
</comment>
<comment type="catalytic activity">
    <reaction evidence="1">
        <text>GTP + H2O = 7,8-dihydroneopterin 2',3'-cyclic phosphate + formate + diphosphate + H(+)</text>
        <dbReference type="Rhea" id="RHEA:25860"/>
        <dbReference type="ChEBI" id="CHEBI:15377"/>
        <dbReference type="ChEBI" id="CHEBI:15378"/>
        <dbReference type="ChEBI" id="CHEBI:15740"/>
        <dbReference type="ChEBI" id="CHEBI:33019"/>
        <dbReference type="ChEBI" id="CHEBI:37565"/>
        <dbReference type="ChEBI" id="CHEBI:58854"/>
        <dbReference type="EC" id="3.5.4.39"/>
    </reaction>
</comment>
<comment type="cofactor">
    <cofactor evidence="1">
        <name>Fe(2+)</name>
        <dbReference type="ChEBI" id="CHEBI:29033"/>
    </cofactor>
    <text evidence="1">Binds 1 Fe(2+) ion per subunit.</text>
</comment>
<comment type="pathway">
    <text evidence="1">Cofactor biosynthesis; 5,6,7,8-tetrahydromethanopterin biosynthesis.</text>
</comment>
<comment type="subunit">
    <text evidence="1">Homodimer.</text>
</comment>
<comment type="similarity">
    <text evidence="1">Belongs to the GTP cyclohydrolase IV family.</text>
</comment>
<name>MPTA_METBU</name>
<protein>
    <recommendedName>
        <fullName evidence="1">GTP cyclohydrolase MptA</fullName>
        <ecNumber evidence="1">3.5.4.39</ecNumber>
    </recommendedName>
    <alternativeName>
        <fullName evidence="1">GTP cyclohydrolase IV</fullName>
    </alternativeName>
</protein>
<sequence length="317" mass="35543">MELPIAQFPDVQANRPKIPINLTRVGVTGVKKLVEIKRKDKRPIVLISTFEIFVDLPSDRKGANLSRNFEAMDEVLEKAINLPVYEIEKLCNDVAKSLLRRHEYATRSEVRMKSEYVVKREAPSTKMKCQEVVDIFAEATATRLEDGDIDVKKLIGAEVVGMTACPCAQEIMRDNAKTALRELGVGLETVMNFLNKVPMATHNQRGRGIISLEVSGDVDVSLETIIRIIESSMSSSIVELLKRADEALVVERAHQNPKFVEDCVRTMAQNIVSEFAHVPDSALVTIKQINEESIHRHNAFAERVALLGDLRDEIKNN</sequence>